<comment type="function">
    <text evidence="1">Could be a nuclease involved in processing of the 5'-end of pre-16S rRNA.</text>
</comment>
<comment type="subcellular location">
    <subcellularLocation>
        <location evidence="1">Cytoplasm</location>
    </subcellularLocation>
</comment>
<comment type="similarity">
    <text evidence="1">Belongs to the YqgF nuclease family.</text>
</comment>
<accession>Q4K4E4</accession>
<organism>
    <name type="scientific">Pseudomonas fluorescens (strain ATCC BAA-477 / NRRL B-23932 / Pf-5)</name>
    <dbReference type="NCBI Taxonomy" id="220664"/>
    <lineage>
        <taxon>Bacteria</taxon>
        <taxon>Pseudomonadati</taxon>
        <taxon>Pseudomonadota</taxon>
        <taxon>Gammaproteobacteria</taxon>
        <taxon>Pseudomonadales</taxon>
        <taxon>Pseudomonadaceae</taxon>
        <taxon>Pseudomonas</taxon>
    </lineage>
</organism>
<reference key="1">
    <citation type="journal article" date="2005" name="Nat. Biotechnol.">
        <title>Complete genome sequence of the plant commensal Pseudomonas fluorescens Pf-5.</title>
        <authorList>
            <person name="Paulsen I.T."/>
            <person name="Press C.M."/>
            <person name="Ravel J."/>
            <person name="Kobayashi D.Y."/>
            <person name="Myers G.S.A."/>
            <person name="Mavrodi D.V."/>
            <person name="DeBoy R.T."/>
            <person name="Seshadri R."/>
            <person name="Ren Q."/>
            <person name="Madupu R."/>
            <person name="Dodson R.J."/>
            <person name="Durkin A.S."/>
            <person name="Brinkac L.M."/>
            <person name="Daugherty S.C."/>
            <person name="Sullivan S.A."/>
            <person name="Rosovitz M.J."/>
            <person name="Gwinn M.L."/>
            <person name="Zhou L."/>
            <person name="Schneider D.J."/>
            <person name="Cartinhour S.W."/>
            <person name="Nelson W.C."/>
            <person name="Weidman J."/>
            <person name="Watkins K."/>
            <person name="Tran K."/>
            <person name="Khouri H."/>
            <person name="Pierson E.A."/>
            <person name="Pierson L.S. III"/>
            <person name="Thomashow L.S."/>
            <person name="Loper J.E."/>
        </authorList>
    </citation>
    <scope>NUCLEOTIDE SEQUENCE [LARGE SCALE GENOMIC DNA]</scope>
    <source>
        <strain>ATCC BAA-477 / NRRL B-23932 / Pf-5</strain>
    </source>
</reference>
<sequence>MALRLILGFDYGTKQIGVAVGQAITGQARELCTLKAQNGVPDWNQVEALIKEWKPDAVVVGLPLNMDGSPSDMCVRAEKFARRLNGRFNVPFYTHDERLTTFEAKGERLARGGQKGSYRDNPVDAIAAALLLQGWLDENAGLLNT</sequence>
<keyword id="KW-0963">Cytoplasm</keyword>
<keyword id="KW-0378">Hydrolase</keyword>
<keyword id="KW-0540">Nuclease</keyword>
<keyword id="KW-0690">Ribosome biogenesis</keyword>
<evidence type="ECO:0000255" key="1">
    <source>
        <dbReference type="HAMAP-Rule" id="MF_00651"/>
    </source>
</evidence>
<proteinExistence type="inferred from homology"/>
<name>YQGF_PSEF5</name>
<gene>
    <name type="ordered locus">PFL_5831</name>
</gene>
<dbReference type="EC" id="3.1.-.-" evidence="1"/>
<dbReference type="EMBL" id="CP000076">
    <property type="protein sequence ID" value="AAY95021.1"/>
    <property type="molecule type" value="Genomic_DNA"/>
</dbReference>
<dbReference type="SMR" id="Q4K4E4"/>
<dbReference type="STRING" id="220664.PFL_5831"/>
<dbReference type="KEGG" id="pfl:PFL_5831"/>
<dbReference type="PATRIC" id="fig|220664.5.peg.5945"/>
<dbReference type="eggNOG" id="COG0816">
    <property type="taxonomic scope" value="Bacteria"/>
</dbReference>
<dbReference type="HOGENOM" id="CLU_098240_3_0_6"/>
<dbReference type="Proteomes" id="UP000008540">
    <property type="component" value="Chromosome"/>
</dbReference>
<dbReference type="GO" id="GO:0005829">
    <property type="term" value="C:cytosol"/>
    <property type="evidence" value="ECO:0007669"/>
    <property type="project" value="TreeGrafter"/>
</dbReference>
<dbReference type="GO" id="GO:0004518">
    <property type="term" value="F:nuclease activity"/>
    <property type="evidence" value="ECO:0007669"/>
    <property type="project" value="UniProtKB-KW"/>
</dbReference>
<dbReference type="GO" id="GO:0000967">
    <property type="term" value="P:rRNA 5'-end processing"/>
    <property type="evidence" value="ECO:0007669"/>
    <property type="project" value="UniProtKB-UniRule"/>
</dbReference>
<dbReference type="CDD" id="cd16964">
    <property type="entry name" value="YqgF"/>
    <property type="match status" value="1"/>
</dbReference>
<dbReference type="FunFam" id="3.30.420.140:FF:000002">
    <property type="entry name" value="Putative pre-16S rRNA nuclease"/>
    <property type="match status" value="1"/>
</dbReference>
<dbReference type="Gene3D" id="3.30.420.140">
    <property type="entry name" value="YqgF/RNase H-like domain"/>
    <property type="match status" value="1"/>
</dbReference>
<dbReference type="HAMAP" id="MF_00651">
    <property type="entry name" value="Nuclease_YqgF"/>
    <property type="match status" value="1"/>
</dbReference>
<dbReference type="InterPro" id="IPR012337">
    <property type="entry name" value="RNaseH-like_sf"/>
</dbReference>
<dbReference type="InterPro" id="IPR005227">
    <property type="entry name" value="YqgF"/>
</dbReference>
<dbReference type="InterPro" id="IPR006641">
    <property type="entry name" value="YqgF/RNaseH-like_dom"/>
</dbReference>
<dbReference type="InterPro" id="IPR037027">
    <property type="entry name" value="YqgF/RNaseH-like_dom_sf"/>
</dbReference>
<dbReference type="NCBIfam" id="TIGR00250">
    <property type="entry name" value="RNAse_H_YqgF"/>
    <property type="match status" value="1"/>
</dbReference>
<dbReference type="PANTHER" id="PTHR33317">
    <property type="entry name" value="POLYNUCLEOTIDYL TRANSFERASE, RIBONUCLEASE H-LIKE SUPERFAMILY PROTEIN"/>
    <property type="match status" value="1"/>
</dbReference>
<dbReference type="PANTHER" id="PTHR33317:SF4">
    <property type="entry name" value="POLYNUCLEOTIDYL TRANSFERASE, RIBONUCLEASE H-LIKE SUPERFAMILY PROTEIN"/>
    <property type="match status" value="1"/>
</dbReference>
<dbReference type="Pfam" id="PF03652">
    <property type="entry name" value="RuvX"/>
    <property type="match status" value="1"/>
</dbReference>
<dbReference type="SMART" id="SM00732">
    <property type="entry name" value="YqgFc"/>
    <property type="match status" value="1"/>
</dbReference>
<dbReference type="SUPFAM" id="SSF53098">
    <property type="entry name" value="Ribonuclease H-like"/>
    <property type="match status" value="1"/>
</dbReference>
<protein>
    <recommendedName>
        <fullName evidence="1">Putative pre-16S rRNA nuclease</fullName>
        <ecNumber evidence="1">3.1.-.-</ecNumber>
    </recommendedName>
</protein>
<feature type="chain" id="PRO_0000257565" description="Putative pre-16S rRNA nuclease">
    <location>
        <begin position="1"/>
        <end position="145"/>
    </location>
</feature>